<evidence type="ECO:0000255" key="1">
    <source>
        <dbReference type="HAMAP-Rule" id="MF_00358"/>
    </source>
</evidence>
<evidence type="ECO:0000305" key="2"/>
<sequence length="57" mass="6773">MSKTVVRKNESLEDALRRFKRSVSKTGTLAEARKREFYEKPSVKRKKKSEAARKRKF</sequence>
<keyword id="KW-0687">Ribonucleoprotein</keyword>
<keyword id="KW-0689">Ribosomal protein</keyword>
<protein>
    <recommendedName>
        <fullName evidence="1">Small ribosomal subunit protein bS21</fullName>
    </recommendedName>
    <alternativeName>
        <fullName evidence="2">30S ribosomal protein S21</fullName>
    </alternativeName>
</protein>
<reference key="1">
    <citation type="journal article" date="2006" name="J. Bacteriol.">
        <title>Pathogenomic sequence analysis of Bacillus cereus and Bacillus thuringiensis isolates closely related to Bacillus anthracis.</title>
        <authorList>
            <person name="Han C.S."/>
            <person name="Xie G."/>
            <person name="Challacombe J.F."/>
            <person name="Altherr M.R."/>
            <person name="Bhotika S.S."/>
            <person name="Bruce D."/>
            <person name="Campbell C.S."/>
            <person name="Campbell M.L."/>
            <person name="Chen J."/>
            <person name="Chertkov O."/>
            <person name="Cleland C."/>
            <person name="Dimitrijevic M."/>
            <person name="Doggett N.A."/>
            <person name="Fawcett J.J."/>
            <person name="Glavina T."/>
            <person name="Goodwin L.A."/>
            <person name="Hill K.K."/>
            <person name="Hitchcock P."/>
            <person name="Jackson P.J."/>
            <person name="Keim P."/>
            <person name="Kewalramani A.R."/>
            <person name="Longmire J."/>
            <person name="Lucas S."/>
            <person name="Malfatti S."/>
            <person name="McMurry K."/>
            <person name="Meincke L.J."/>
            <person name="Misra M."/>
            <person name="Moseman B.L."/>
            <person name="Mundt M."/>
            <person name="Munk A.C."/>
            <person name="Okinaka R.T."/>
            <person name="Parson-Quintana B."/>
            <person name="Reilly L.P."/>
            <person name="Richardson P."/>
            <person name="Robinson D.L."/>
            <person name="Rubin E."/>
            <person name="Saunders E."/>
            <person name="Tapia R."/>
            <person name="Tesmer J.G."/>
            <person name="Thayer N."/>
            <person name="Thompson L.S."/>
            <person name="Tice H."/>
            <person name="Ticknor L.O."/>
            <person name="Wills P.L."/>
            <person name="Brettin T.S."/>
            <person name="Gilna P."/>
        </authorList>
    </citation>
    <scope>NUCLEOTIDE SEQUENCE [LARGE SCALE GENOMIC DNA]</scope>
    <source>
        <strain>97-27</strain>
    </source>
</reference>
<comment type="similarity">
    <text evidence="1">Belongs to the bacterial ribosomal protein bS21 family.</text>
</comment>
<dbReference type="EMBL" id="AE017355">
    <property type="protein sequence ID" value="AAT63520.1"/>
    <property type="molecule type" value="Genomic_DNA"/>
</dbReference>
<dbReference type="RefSeq" id="WP_000048061.1">
    <property type="nucleotide sequence ID" value="NC_005957.1"/>
</dbReference>
<dbReference type="RefSeq" id="YP_038364.1">
    <property type="nucleotide sequence ID" value="NC_005957.1"/>
</dbReference>
<dbReference type="SMR" id="Q6HDL2"/>
<dbReference type="GeneID" id="93006791"/>
<dbReference type="KEGG" id="btk:BT9727_4046"/>
<dbReference type="PATRIC" id="fig|281309.8.peg.4318"/>
<dbReference type="HOGENOM" id="CLU_159258_3_2_9"/>
<dbReference type="PRO" id="PR:Q6HDL2"/>
<dbReference type="Proteomes" id="UP000001301">
    <property type="component" value="Chromosome"/>
</dbReference>
<dbReference type="GO" id="GO:1990904">
    <property type="term" value="C:ribonucleoprotein complex"/>
    <property type="evidence" value="ECO:0007669"/>
    <property type="project" value="UniProtKB-KW"/>
</dbReference>
<dbReference type="GO" id="GO:0005840">
    <property type="term" value="C:ribosome"/>
    <property type="evidence" value="ECO:0007669"/>
    <property type="project" value="UniProtKB-KW"/>
</dbReference>
<dbReference type="GO" id="GO:0003735">
    <property type="term" value="F:structural constituent of ribosome"/>
    <property type="evidence" value="ECO:0007669"/>
    <property type="project" value="InterPro"/>
</dbReference>
<dbReference type="GO" id="GO:0006412">
    <property type="term" value="P:translation"/>
    <property type="evidence" value="ECO:0007669"/>
    <property type="project" value="UniProtKB-UniRule"/>
</dbReference>
<dbReference type="Gene3D" id="1.20.5.1150">
    <property type="entry name" value="Ribosomal protein S8"/>
    <property type="match status" value="1"/>
</dbReference>
<dbReference type="HAMAP" id="MF_00358">
    <property type="entry name" value="Ribosomal_bS21"/>
    <property type="match status" value="1"/>
</dbReference>
<dbReference type="InterPro" id="IPR001911">
    <property type="entry name" value="Ribosomal_bS21"/>
</dbReference>
<dbReference type="InterPro" id="IPR018278">
    <property type="entry name" value="Ribosomal_bS21_CS"/>
</dbReference>
<dbReference type="InterPro" id="IPR038380">
    <property type="entry name" value="Ribosomal_bS21_sf"/>
</dbReference>
<dbReference type="NCBIfam" id="TIGR00030">
    <property type="entry name" value="S21p"/>
    <property type="match status" value="1"/>
</dbReference>
<dbReference type="PANTHER" id="PTHR21109">
    <property type="entry name" value="MITOCHONDRIAL 28S RIBOSOMAL PROTEIN S21"/>
    <property type="match status" value="1"/>
</dbReference>
<dbReference type="PANTHER" id="PTHR21109:SF22">
    <property type="entry name" value="SMALL RIBOSOMAL SUBUNIT PROTEIN BS21"/>
    <property type="match status" value="1"/>
</dbReference>
<dbReference type="Pfam" id="PF01165">
    <property type="entry name" value="Ribosomal_S21"/>
    <property type="match status" value="1"/>
</dbReference>
<dbReference type="PRINTS" id="PR00976">
    <property type="entry name" value="RIBOSOMALS21"/>
</dbReference>
<dbReference type="PROSITE" id="PS01181">
    <property type="entry name" value="RIBOSOMAL_S21"/>
    <property type="match status" value="1"/>
</dbReference>
<proteinExistence type="inferred from homology"/>
<gene>
    <name evidence="1" type="primary">rpsU</name>
    <name type="ordered locus">BT9727_4046</name>
</gene>
<feature type="chain" id="PRO_0000178298" description="Small ribosomal subunit protein bS21">
    <location>
        <begin position="1"/>
        <end position="57"/>
    </location>
</feature>
<name>RS21_BACHK</name>
<accession>Q6HDL2</accession>
<organism>
    <name type="scientific">Bacillus thuringiensis subsp. konkukian (strain 97-27)</name>
    <dbReference type="NCBI Taxonomy" id="281309"/>
    <lineage>
        <taxon>Bacteria</taxon>
        <taxon>Bacillati</taxon>
        <taxon>Bacillota</taxon>
        <taxon>Bacilli</taxon>
        <taxon>Bacillales</taxon>
        <taxon>Bacillaceae</taxon>
        <taxon>Bacillus</taxon>
        <taxon>Bacillus cereus group</taxon>
    </lineage>
</organism>